<comment type="catalytic activity">
    <reaction>
        <text>an organic molecule + reduced [NADPH--hemoprotein reductase] + O2 = an alcohol + oxidized [NADPH--hemoprotein reductase] + H2O + H(+)</text>
        <dbReference type="Rhea" id="RHEA:17149"/>
        <dbReference type="Rhea" id="RHEA-COMP:11964"/>
        <dbReference type="Rhea" id="RHEA-COMP:11965"/>
        <dbReference type="ChEBI" id="CHEBI:15377"/>
        <dbReference type="ChEBI" id="CHEBI:15378"/>
        <dbReference type="ChEBI" id="CHEBI:15379"/>
        <dbReference type="ChEBI" id="CHEBI:30879"/>
        <dbReference type="ChEBI" id="CHEBI:57618"/>
        <dbReference type="ChEBI" id="CHEBI:58210"/>
        <dbReference type="ChEBI" id="CHEBI:142491"/>
        <dbReference type="EC" id="1.14.14.1"/>
    </reaction>
</comment>
<comment type="cofactor">
    <cofactor evidence="1">
        <name>heme</name>
        <dbReference type="ChEBI" id="CHEBI:30413"/>
    </cofactor>
</comment>
<comment type="subcellular location">
    <subcellularLocation>
        <location>Endoplasmic reticulum membrane</location>
        <topology>Peripheral membrane protein</topology>
    </subcellularLocation>
    <subcellularLocation>
        <location>Microsome membrane</location>
        <topology>Peripheral membrane protein</topology>
    </subcellularLocation>
</comment>
<comment type="tissue specificity">
    <text>High expression in liver and kidney. Lower expression in brain.</text>
</comment>
<comment type="similarity">
    <text evidence="2">Belongs to the cytochrome P450 family.</text>
</comment>
<evidence type="ECO:0000250" key="1">
    <source>
        <dbReference type="UniProtKB" id="P51869"/>
    </source>
</evidence>
<evidence type="ECO:0000305" key="2"/>
<feature type="chain" id="PRO_0000051853" description="Cytochrome P450 4F5">
    <location>
        <begin position="1"/>
        <end position="526"/>
    </location>
</feature>
<feature type="binding site" description="axial binding residue" evidence="1">
    <location>
        <position position="470"/>
    </location>
    <ligand>
        <name>heme</name>
        <dbReference type="ChEBI" id="CHEBI:30413"/>
    </ligand>
    <ligandPart>
        <name>Fe</name>
        <dbReference type="ChEBI" id="CHEBI:18248"/>
    </ligandPart>
</feature>
<proteinExistence type="evidence at transcript level"/>
<sequence>MPWLTVSGLDLGSVVTSTWHLLLLGAASWILARILAWTYSFCENCSRLRCFPQSPKRNWFLGHLGTIQSNEEGMRLVTEMGQTFRDIHLCWLGPVIPVLRLVDPAFVAPLLQAPALVAPKDTTFLRFLKPWLGDGLFLSSGDKWSRHRRLLTPAFHFDILKPYVKIFNQSVNIMHAKWKHLCLEGSARLEMFENISLMTLDSLQKCLFGFDSNCQESPSEYISAILELSSLIIKRSQQLFLYLDFLYYRTADGRRFRKACDLVHNFTDAVIRERRRLLSSQGTDEFLESKTKSKSKTLDFIDVLLLAKDEHGKELSDEDIRAEADTFMFGGHDTTASALSWILYNLARHPEYQERCRQEVWELLRDREPEEIEWDDLAQLPFLTMCIKESLRLHPPAIDLLRRCTQDIVLPDGRVIPKGNICVISIFGIHHNPSVWPDPEVFDPFRFDSENRQKRSPLSFIPFSAGPRNCIGQTFAMNEMKVVVALTLLRFRVLPDDKEPRRKPEIILRAEGGLWLRMEPLSTDTQ</sequence>
<accession>P51870</accession>
<gene>
    <name type="primary">Cyp4f5</name>
</gene>
<reference key="1">
    <citation type="journal article" date="1995" name="Biochem. Biophys. Res. Commun.">
        <title>cDNA cloning of three new forms of rat brain cytochrome P450 belonging to the CYP4F subfamily.</title>
        <authorList>
            <person name="Kawashima H."/>
            <person name="Strobel H.W."/>
        </authorList>
    </citation>
    <scope>NUCLEOTIDE SEQUENCE [MRNA]</scope>
    <source>
        <strain>Sprague-Dawley</strain>
        <tissue>Brain</tissue>
    </source>
</reference>
<keyword id="KW-0256">Endoplasmic reticulum</keyword>
<keyword id="KW-0349">Heme</keyword>
<keyword id="KW-0408">Iron</keyword>
<keyword id="KW-0472">Membrane</keyword>
<keyword id="KW-0479">Metal-binding</keyword>
<keyword id="KW-0492">Microsome</keyword>
<keyword id="KW-0503">Monooxygenase</keyword>
<keyword id="KW-0560">Oxidoreductase</keyword>
<keyword id="KW-1185">Reference proteome</keyword>
<name>CP4F5_RAT</name>
<dbReference type="EC" id="1.14.14.1"/>
<dbReference type="EMBL" id="U39207">
    <property type="protein sequence ID" value="AAC52359.1"/>
    <property type="molecule type" value="mRNA"/>
</dbReference>
<dbReference type="PIR" id="JC4533">
    <property type="entry name" value="JC4533"/>
</dbReference>
<dbReference type="RefSeq" id="NP_775147.1">
    <property type="nucleotide sequence ID" value="NM_173124.1"/>
</dbReference>
<dbReference type="SMR" id="P51870"/>
<dbReference type="FunCoup" id="P51870">
    <property type="interactions" value="95"/>
</dbReference>
<dbReference type="IntAct" id="P51870">
    <property type="interactions" value="1"/>
</dbReference>
<dbReference type="STRING" id="10116.ENSRNOP00000007428"/>
<dbReference type="ChEMBL" id="CHEMBL3509598"/>
<dbReference type="PhosphoSitePlus" id="P51870"/>
<dbReference type="PaxDb" id="10116-ENSRNOP00000007428"/>
<dbReference type="GeneID" id="286905"/>
<dbReference type="KEGG" id="rno:286905"/>
<dbReference type="UCSC" id="RGD:708364">
    <property type="organism name" value="rat"/>
</dbReference>
<dbReference type="AGR" id="RGD:708364"/>
<dbReference type="CTD" id="286905"/>
<dbReference type="RGD" id="708364">
    <property type="gene designation" value="Cyp4f5"/>
</dbReference>
<dbReference type="eggNOG" id="KOG0157">
    <property type="taxonomic scope" value="Eukaryota"/>
</dbReference>
<dbReference type="InParanoid" id="P51870"/>
<dbReference type="OrthoDB" id="1470350at2759"/>
<dbReference type="PhylomeDB" id="P51870"/>
<dbReference type="PRO" id="PR:P51870"/>
<dbReference type="Proteomes" id="UP000002494">
    <property type="component" value="Unplaced"/>
</dbReference>
<dbReference type="GO" id="GO:0005789">
    <property type="term" value="C:endoplasmic reticulum membrane"/>
    <property type="evidence" value="ECO:0007669"/>
    <property type="project" value="UniProtKB-SubCell"/>
</dbReference>
<dbReference type="GO" id="GO:0020037">
    <property type="term" value="F:heme binding"/>
    <property type="evidence" value="ECO:0007669"/>
    <property type="project" value="InterPro"/>
</dbReference>
<dbReference type="GO" id="GO:0005506">
    <property type="term" value="F:iron ion binding"/>
    <property type="evidence" value="ECO:0007669"/>
    <property type="project" value="InterPro"/>
</dbReference>
<dbReference type="GO" id="GO:0016712">
    <property type="term" value="F:oxidoreductase activity, acting on paired donors, with incorporation or reduction of molecular oxygen, reduced flavin or flavoprotein as one donor, and incorporation of one atom of oxygen"/>
    <property type="evidence" value="ECO:0007669"/>
    <property type="project" value="UniProtKB-EC"/>
</dbReference>
<dbReference type="GO" id="GO:0006691">
    <property type="term" value="P:leukotriene metabolic process"/>
    <property type="evidence" value="ECO:0000315"/>
    <property type="project" value="RGD"/>
</dbReference>
<dbReference type="GO" id="GO:1904681">
    <property type="term" value="P:response to 3-methylcholanthrene"/>
    <property type="evidence" value="ECO:0000270"/>
    <property type="project" value="RGD"/>
</dbReference>
<dbReference type="CDD" id="cd20679">
    <property type="entry name" value="CYP4F"/>
    <property type="match status" value="1"/>
</dbReference>
<dbReference type="FunFam" id="1.10.630.10:FF:000005">
    <property type="entry name" value="cytochrome P450 4F22 isoform X2"/>
    <property type="match status" value="1"/>
</dbReference>
<dbReference type="Gene3D" id="1.10.630.10">
    <property type="entry name" value="Cytochrome P450"/>
    <property type="match status" value="1"/>
</dbReference>
<dbReference type="InterPro" id="IPR001128">
    <property type="entry name" value="Cyt_P450"/>
</dbReference>
<dbReference type="InterPro" id="IPR017972">
    <property type="entry name" value="Cyt_P450_CS"/>
</dbReference>
<dbReference type="InterPro" id="IPR002403">
    <property type="entry name" value="Cyt_P450_E_grp-IV"/>
</dbReference>
<dbReference type="InterPro" id="IPR036396">
    <property type="entry name" value="Cyt_P450_sf"/>
</dbReference>
<dbReference type="InterPro" id="IPR050196">
    <property type="entry name" value="Cytochrome_P450_Monoox"/>
</dbReference>
<dbReference type="PANTHER" id="PTHR24291:SF168">
    <property type="entry name" value="CYTOCHROME P450 CYP4F16-RELATED"/>
    <property type="match status" value="1"/>
</dbReference>
<dbReference type="PANTHER" id="PTHR24291">
    <property type="entry name" value="CYTOCHROME P450 FAMILY 4"/>
    <property type="match status" value="1"/>
</dbReference>
<dbReference type="Pfam" id="PF00067">
    <property type="entry name" value="p450"/>
    <property type="match status" value="1"/>
</dbReference>
<dbReference type="PRINTS" id="PR00465">
    <property type="entry name" value="EP450IV"/>
</dbReference>
<dbReference type="PRINTS" id="PR00385">
    <property type="entry name" value="P450"/>
</dbReference>
<dbReference type="SUPFAM" id="SSF48264">
    <property type="entry name" value="Cytochrome P450"/>
    <property type="match status" value="1"/>
</dbReference>
<dbReference type="PROSITE" id="PS00086">
    <property type="entry name" value="CYTOCHROME_P450"/>
    <property type="match status" value="1"/>
</dbReference>
<organism>
    <name type="scientific">Rattus norvegicus</name>
    <name type="common">Rat</name>
    <dbReference type="NCBI Taxonomy" id="10116"/>
    <lineage>
        <taxon>Eukaryota</taxon>
        <taxon>Metazoa</taxon>
        <taxon>Chordata</taxon>
        <taxon>Craniata</taxon>
        <taxon>Vertebrata</taxon>
        <taxon>Euteleostomi</taxon>
        <taxon>Mammalia</taxon>
        <taxon>Eutheria</taxon>
        <taxon>Euarchontoglires</taxon>
        <taxon>Glires</taxon>
        <taxon>Rodentia</taxon>
        <taxon>Myomorpha</taxon>
        <taxon>Muroidea</taxon>
        <taxon>Muridae</taxon>
        <taxon>Murinae</taxon>
        <taxon>Rattus</taxon>
    </lineage>
</organism>
<protein>
    <recommendedName>
        <fullName>Cytochrome P450 4F5</fullName>
        <ecNumber>1.14.14.1</ecNumber>
    </recommendedName>
    <alternativeName>
        <fullName>CYPIVF5</fullName>
    </alternativeName>
</protein>